<accession>Q01592</accession>
<feature type="chain" id="PRO_0000137721" description="Argininosuccinate lyase">
    <location>
        <begin position="1"/>
        <end position="466"/>
    </location>
</feature>
<feature type="active site" description="Proton acceptor" evidence="1">
    <location>
        <position position="160"/>
    </location>
</feature>
<feature type="active site" description="Proton donor" evidence="1">
    <location>
        <position position="281"/>
    </location>
</feature>
<feature type="binding site" description="in chain A" evidence="1">
    <location>
        <position position="27"/>
    </location>
    <ligand>
        <name>2-(N(omega)-L-arginino)succinate</name>
        <dbReference type="ChEBI" id="CHEBI:57472"/>
        <note>ligand shared between tetrameric partners</note>
    </ligand>
</feature>
<feature type="binding site" description="in chain A" evidence="1">
    <location>
        <position position="114"/>
    </location>
    <ligand>
        <name>2-(N(omega)-L-arginino)succinate</name>
        <dbReference type="ChEBI" id="CHEBI:57472"/>
        <note>ligand shared between tetrameric partners</note>
    </ligand>
</feature>
<feature type="binding site" description="in chain C" evidence="1">
    <location>
        <position position="159"/>
    </location>
    <ligand>
        <name>2-(N(omega)-L-arginino)succinate</name>
        <dbReference type="ChEBI" id="CHEBI:57472"/>
        <note>ligand shared between tetrameric partners</note>
    </ligand>
</feature>
<feature type="binding site" description="in chain B" evidence="1">
    <location>
        <position position="289"/>
    </location>
    <ligand>
        <name>2-(N(omega)-L-arginino)succinate</name>
        <dbReference type="ChEBI" id="CHEBI:57472"/>
        <note>ligand shared between tetrameric partners</note>
    </ligand>
</feature>
<feature type="binding site" description="in chain A" evidence="1">
    <location>
        <position position="321"/>
    </location>
    <ligand>
        <name>2-(N(omega)-L-arginino)succinate</name>
        <dbReference type="ChEBI" id="CHEBI:57472"/>
        <note>ligand shared between tetrameric partners</note>
    </ligand>
</feature>
<feature type="binding site" description="in chain A" evidence="1">
    <location>
        <position position="326"/>
    </location>
    <ligand>
        <name>2-(N(omega)-L-arginino)succinate</name>
        <dbReference type="ChEBI" id="CHEBI:57472"/>
        <note>ligand shared between tetrameric partners</note>
    </ligand>
</feature>
<feature type="binding site" description="in chain A" evidence="1">
    <location>
        <position position="329"/>
    </location>
    <ligand>
        <name>2-(N(omega)-L-arginino)succinate</name>
        <dbReference type="ChEBI" id="CHEBI:57472"/>
        <note>ligand shared between tetrameric partners</note>
    </ligand>
</feature>
<feature type="site" description="Increases basicity of active site His" evidence="1">
    <location>
        <position position="294"/>
    </location>
</feature>
<sequence length="466" mass="51086">MASEGDKMLGGRFVGSTDPVMEMLSASITIDQRLAEVDIQGSMAYAKALEKAGILSKSELEKTLSGLEKISEEWSKGVFVVTPTDEDIHTANERRLKELIGDIAGKLHTGRSRNDQVVTDLKLFMKNSLSVISTHLLQLIKTLVERAAIEVDVILPGYTHLQKTQPIRWSQFLLSHAVALTRDSERLGEIKKRINILPLGSGALAGNPLEIDRELLRSELDFASISLNSMDAVRQRDSVVEFLSVAALLMIHLSKMAEDLIIYSTSEFGFLTLSDTYCTGSSVMPQKKNPDSLELIRSKAGRVFGRLAAILMVLKGLPSTYNKDLQEDKEAVFDVVDTLNAVLQVATGVISTLQINKENMEKALSPEILSSDLALYLVHKGMPFRQAHVASGKAVHLAESKGITLNNLSLDDLKSISPLFGSDVSQVFNVVNSVEQYTALGGTAKSSVTAQIEQLRELLKRHKEQA</sequence>
<organism>
    <name type="scientific">Columba livia</name>
    <name type="common">Rock dove</name>
    <dbReference type="NCBI Taxonomy" id="8932"/>
    <lineage>
        <taxon>Eukaryota</taxon>
        <taxon>Metazoa</taxon>
        <taxon>Chordata</taxon>
        <taxon>Craniata</taxon>
        <taxon>Vertebrata</taxon>
        <taxon>Euteleostomi</taxon>
        <taxon>Archelosauria</taxon>
        <taxon>Archosauria</taxon>
        <taxon>Dinosauria</taxon>
        <taxon>Saurischia</taxon>
        <taxon>Theropoda</taxon>
        <taxon>Coelurosauria</taxon>
        <taxon>Aves</taxon>
        <taxon>Neognathae</taxon>
        <taxon>Neoaves</taxon>
        <taxon>Columbimorphae</taxon>
        <taxon>Columbiformes</taxon>
        <taxon>Columbidae</taxon>
        <taxon>Columba</taxon>
    </lineage>
</organism>
<protein>
    <recommendedName>
        <fullName>Argininosuccinate lyase</fullName>
        <shortName>ASAL</shortName>
        <ecNumber>4.3.2.1</ecNumber>
    </recommendedName>
    <alternativeName>
        <fullName>Arginosuccinase</fullName>
    </alternativeName>
    <alternativeName>
        <fullName>Delta crystallin</fullName>
    </alternativeName>
</protein>
<name>ARLY_COLLI</name>
<keyword id="KW-0028">Amino-acid biosynthesis</keyword>
<keyword id="KW-0055">Arginine biosynthesis</keyword>
<keyword id="KW-0273">Eye lens protein</keyword>
<keyword id="KW-0456">Lyase</keyword>
<evidence type="ECO:0000250" key="1">
    <source>
        <dbReference type="UniProtKB" id="P24058"/>
    </source>
</evidence>
<evidence type="ECO:0000269" key="2">
    <source>
    </source>
</evidence>
<evidence type="ECO:0000269" key="3">
    <source>
    </source>
</evidence>
<evidence type="ECO:0000305" key="4"/>
<reference key="1">
    <citation type="journal article" date="1992" name="FEBS Lett.">
        <title>Sequence analysis of pigeon delta-crystallin gene and its deduced primary structure. Comparison of avian delta-crystallins with and without endogenous argininosuccinate lyase activity.</title>
        <authorList>
            <person name="Lin C.-W."/>
            <person name="Chiou S.-H."/>
        </authorList>
    </citation>
    <scope>NUCLEOTIDE SEQUENCE [MRNA]</scope>
    <scope>TISSUE SPECIFICITY</scope>
    <source>
        <tissue>Lens</tissue>
    </source>
</reference>
<reference key="2">
    <citation type="journal article" date="1992" name="Biochim. Biophys. Acta">
        <title>Biochemical characterization of crystallins from pigeon lenses: structural and sequence analysis of pigeon delta-crystallin.</title>
        <authorList>
            <person name="Chiou S.-H."/>
            <person name="Hung C.-C."/>
            <person name="Lin C.-W."/>
        </authorList>
    </citation>
    <scope>NUCLEOTIDE SEQUENCE [MRNA] OF 1-100</scope>
    <scope>CATALYTIC ACTIVITY</scope>
    <scope>SUBUNIT</scope>
    <scope>BLOCKAGE OF N-TERMINUS</scope>
    <scope>TISSUE SPECIFICITY</scope>
    <source>
        <tissue>Lens</tissue>
    </source>
</reference>
<gene>
    <name type="primary">ASL</name>
    <name type="synonym">DELTAP</name>
</gene>
<proteinExistence type="evidence at protein level"/>
<dbReference type="EC" id="4.3.2.1"/>
<dbReference type="EMBL" id="X66404">
    <property type="protein sequence ID" value="CAA47031.1"/>
    <property type="molecule type" value="mRNA"/>
</dbReference>
<dbReference type="PIR" id="S29247">
    <property type="entry name" value="S29247"/>
</dbReference>
<dbReference type="RefSeq" id="NP_001302456.1">
    <property type="nucleotide sequence ID" value="NM_001315527.1"/>
</dbReference>
<dbReference type="SMR" id="Q01592"/>
<dbReference type="GeneID" id="102086394"/>
<dbReference type="KEGG" id="clv:102086394"/>
<dbReference type="OrthoDB" id="204482at8782"/>
<dbReference type="UniPathway" id="UPA00068">
    <property type="reaction ID" value="UER00114"/>
</dbReference>
<dbReference type="GO" id="GO:0005829">
    <property type="term" value="C:cytosol"/>
    <property type="evidence" value="ECO:0007669"/>
    <property type="project" value="TreeGrafter"/>
</dbReference>
<dbReference type="GO" id="GO:0004056">
    <property type="term" value="F:argininosuccinate lyase activity"/>
    <property type="evidence" value="ECO:0007669"/>
    <property type="project" value="UniProtKB-EC"/>
</dbReference>
<dbReference type="GO" id="GO:0005212">
    <property type="term" value="F:structural constituent of eye lens"/>
    <property type="evidence" value="ECO:0007669"/>
    <property type="project" value="UniProtKB-KW"/>
</dbReference>
<dbReference type="GO" id="GO:0042450">
    <property type="term" value="P:arginine biosynthetic process via ornithine"/>
    <property type="evidence" value="ECO:0007669"/>
    <property type="project" value="InterPro"/>
</dbReference>
<dbReference type="GO" id="GO:0006526">
    <property type="term" value="P:L-arginine biosynthetic process"/>
    <property type="evidence" value="ECO:0007669"/>
    <property type="project" value="UniProtKB-UniPathway"/>
</dbReference>
<dbReference type="CDD" id="cd01359">
    <property type="entry name" value="Argininosuccinate_lyase"/>
    <property type="match status" value="1"/>
</dbReference>
<dbReference type="FunFam" id="1.10.275.10:FF:000002">
    <property type="entry name" value="Argininosuccinate lyase"/>
    <property type="match status" value="1"/>
</dbReference>
<dbReference type="FunFam" id="1.10.40.30:FF:000001">
    <property type="entry name" value="Argininosuccinate lyase"/>
    <property type="match status" value="1"/>
</dbReference>
<dbReference type="FunFam" id="1.20.200.10:FF:000002">
    <property type="entry name" value="Argininosuccinate lyase"/>
    <property type="match status" value="1"/>
</dbReference>
<dbReference type="FunFam" id="1.20.200.10:FF:000015">
    <property type="entry name" value="argininosuccinate lyase isoform X2"/>
    <property type="match status" value="1"/>
</dbReference>
<dbReference type="Gene3D" id="1.10.40.30">
    <property type="entry name" value="Fumarase/aspartase (C-terminal domain)"/>
    <property type="match status" value="1"/>
</dbReference>
<dbReference type="Gene3D" id="1.20.200.10">
    <property type="entry name" value="Fumarase/aspartase (Central domain)"/>
    <property type="match status" value="1"/>
</dbReference>
<dbReference type="Gene3D" id="1.10.275.10">
    <property type="entry name" value="Fumarase/aspartase (N-terminal domain)"/>
    <property type="match status" value="1"/>
</dbReference>
<dbReference type="HAMAP" id="MF_00006">
    <property type="entry name" value="Arg_succ_lyase"/>
    <property type="match status" value="1"/>
</dbReference>
<dbReference type="InterPro" id="IPR029419">
    <property type="entry name" value="Arg_succ_lyase_C"/>
</dbReference>
<dbReference type="InterPro" id="IPR009049">
    <property type="entry name" value="Argininosuccinate_lyase"/>
</dbReference>
<dbReference type="InterPro" id="IPR024083">
    <property type="entry name" value="Fumarase/histidase_N"/>
</dbReference>
<dbReference type="InterPro" id="IPR020557">
    <property type="entry name" value="Fumarate_lyase_CS"/>
</dbReference>
<dbReference type="InterPro" id="IPR000362">
    <property type="entry name" value="Fumarate_lyase_fam"/>
</dbReference>
<dbReference type="InterPro" id="IPR022761">
    <property type="entry name" value="Fumarate_lyase_N"/>
</dbReference>
<dbReference type="InterPro" id="IPR008948">
    <property type="entry name" value="L-Aspartase-like"/>
</dbReference>
<dbReference type="NCBIfam" id="TIGR00838">
    <property type="entry name" value="argH"/>
    <property type="match status" value="1"/>
</dbReference>
<dbReference type="PANTHER" id="PTHR43814">
    <property type="entry name" value="ARGININOSUCCINATE LYASE"/>
    <property type="match status" value="1"/>
</dbReference>
<dbReference type="PANTHER" id="PTHR43814:SF1">
    <property type="entry name" value="ARGININOSUCCINATE LYASE"/>
    <property type="match status" value="1"/>
</dbReference>
<dbReference type="Pfam" id="PF14698">
    <property type="entry name" value="ASL_C2"/>
    <property type="match status" value="1"/>
</dbReference>
<dbReference type="Pfam" id="PF00206">
    <property type="entry name" value="Lyase_1"/>
    <property type="match status" value="1"/>
</dbReference>
<dbReference type="PRINTS" id="PR00145">
    <property type="entry name" value="ARGSUCLYASE"/>
</dbReference>
<dbReference type="PRINTS" id="PR00149">
    <property type="entry name" value="FUMRATELYASE"/>
</dbReference>
<dbReference type="SUPFAM" id="SSF48557">
    <property type="entry name" value="L-aspartase-like"/>
    <property type="match status" value="1"/>
</dbReference>
<dbReference type="PROSITE" id="PS00163">
    <property type="entry name" value="FUMARATE_LYASES"/>
    <property type="match status" value="1"/>
</dbReference>
<comment type="function">
    <text>Delta crystallin, the principal crystallin in embryonic lens, is found only in birds and reptiles. This protein also functions as an enzymatically active argininosuccinate lyase, but it has a low activity.</text>
</comment>
<comment type="catalytic activity">
    <reaction evidence="3">
        <text>2-(N(omega)-L-arginino)succinate = fumarate + L-arginine</text>
        <dbReference type="Rhea" id="RHEA:24020"/>
        <dbReference type="ChEBI" id="CHEBI:29806"/>
        <dbReference type="ChEBI" id="CHEBI:32682"/>
        <dbReference type="ChEBI" id="CHEBI:57472"/>
        <dbReference type="EC" id="4.3.2.1"/>
    </reaction>
</comment>
<comment type="pathway">
    <text>Amino-acid biosynthesis; L-arginine biosynthesis; L-arginine from L-ornithine and carbamoyl phosphate: step 3/3.</text>
</comment>
<comment type="subunit">
    <text evidence="3">Homotetramer.</text>
</comment>
<comment type="tissue specificity">
    <text evidence="2 3">Eye lens.</text>
</comment>
<comment type="PTM">
    <text>The N-terminus is blocked.</text>
</comment>
<comment type="similarity">
    <text evidence="4">Belongs to the lyase 1 family. Argininosuccinate lyase subfamily.</text>
</comment>